<sequence>MSSSSDAIKAALEKGRAAGLSATGGKNADYIPFLASVPSDLFGLAVVTADGQTFKTGDADFAFAIESISKVFTLALVMEEIGPDSVREKVGADPTGLPFNSVIALELHNGKSLSPLVNAGAIATASLVPGDTADARWNNILECQCGFAGRRLKLSNEVNQSEQTTNFHNRAIAWLLYSAGTCYSDPMEAVDIYTRQCSTLVTATDLATMGATLAAGGVNPISGKRMVSAGNVAPILAEMTMEGLYTASGDWAYTVGLPGKSGVGGGIMAVVPGELAIAAFSPPLDPAGNSVKAMAAVAAVADSLGHNLYTTRGKVSS</sequence>
<dbReference type="EC" id="3.5.1.2" evidence="1"/>
<dbReference type="EMBL" id="AE014292">
    <property type="protein sequence ID" value="AAN33538.1"/>
    <property type="molecule type" value="Genomic_DNA"/>
</dbReference>
<dbReference type="EMBL" id="CP002998">
    <property type="protein sequence ID" value="AEM19817.1"/>
    <property type="molecule type" value="Genomic_DNA"/>
</dbReference>
<dbReference type="RefSeq" id="WP_004687431.1">
    <property type="nucleotide sequence ID" value="NZ_KN046805.1"/>
</dbReference>
<dbReference type="SMR" id="Q8FWV5"/>
<dbReference type="GeneID" id="97535500"/>
<dbReference type="KEGG" id="bms:BRA0340"/>
<dbReference type="KEGG" id="bsi:BS1330_II0337"/>
<dbReference type="PATRIC" id="fig|204722.21.peg.162"/>
<dbReference type="HOGENOM" id="CLU_027932_1_0_5"/>
<dbReference type="PhylomeDB" id="Q8FWV5"/>
<dbReference type="Proteomes" id="UP000007104">
    <property type="component" value="Chromosome II"/>
</dbReference>
<dbReference type="GO" id="GO:0004359">
    <property type="term" value="F:glutaminase activity"/>
    <property type="evidence" value="ECO:0007669"/>
    <property type="project" value="UniProtKB-UniRule"/>
</dbReference>
<dbReference type="GO" id="GO:0006537">
    <property type="term" value="P:glutamate biosynthetic process"/>
    <property type="evidence" value="ECO:0007669"/>
    <property type="project" value="TreeGrafter"/>
</dbReference>
<dbReference type="GO" id="GO:0006543">
    <property type="term" value="P:glutamine catabolic process"/>
    <property type="evidence" value="ECO:0007669"/>
    <property type="project" value="TreeGrafter"/>
</dbReference>
<dbReference type="Gene3D" id="3.40.710.10">
    <property type="entry name" value="DD-peptidase/beta-lactamase superfamily"/>
    <property type="match status" value="1"/>
</dbReference>
<dbReference type="HAMAP" id="MF_00313">
    <property type="entry name" value="Glutaminase"/>
    <property type="match status" value="1"/>
</dbReference>
<dbReference type="InterPro" id="IPR012338">
    <property type="entry name" value="Beta-lactam/transpept-like"/>
</dbReference>
<dbReference type="InterPro" id="IPR015868">
    <property type="entry name" value="Glutaminase"/>
</dbReference>
<dbReference type="NCBIfam" id="TIGR03814">
    <property type="entry name" value="Gln_ase"/>
    <property type="match status" value="1"/>
</dbReference>
<dbReference type="NCBIfam" id="NF009020">
    <property type="entry name" value="PRK12356.1"/>
    <property type="match status" value="1"/>
</dbReference>
<dbReference type="PANTHER" id="PTHR12544">
    <property type="entry name" value="GLUTAMINASE"/>
    <property type="match status" value="1"/>
</dbReference>
<dbReference type="PANTHER" id="PTHR12544:SF48">
    <property type="entry name" value="GLUTAMINASE 1"/>
    <property type="match status" value="1"/>
</dbReference>
<dbReference type="Pfam" id="PF04960">
    <property type="entry name" value="Glutaminase"/>
    <property type="match status" value="1"/>
</dbReference>
<dbReference type="SUPFAM" id="SSF56601">
    <property type="entry name" value="beta-lactamase/transpeptidase-like"/>
    <property type="match status" value="1"/>
</dbReference>
<name>GLSA_BRUSU</name>
<evidence type="ECO:0000255" key="1">
    <source>
        <dbReference type="HAMAP-Rule" id="MF_00313"/>
    </source>
</evidence>
<feature type="chain" id="PRO_0000110599" description="Glutaminase">
    <location>
        <begin position="1"/>
        <end position="317"/>
    </location>
</feature>
<feature type="binding site" evidence="1">
    <location>
        <position position="67"/>
    </location>
    <ligand>
        <name>substrate</name>
    </ligand>
</feature>
<feature type="binding site" evidence="1">
    <location>
        <position position="118"/>
    </location>
    <ligand>
        <name>substrate</name>
    </ligand>
</feature>
<feature type="binding site" evidence="1">
    <location>
        <position position="162"/>
    </location>
    <ligand>
        <name>substrate</name>
    </ligand>
</feature>
<feature type="binding site" evidence="1">
    <location>
        <position position="169"/>
    </location>
    <ligand>
        <name>substrate</name>
    </ligand>
</feature>
<feature type="binding site" evidence="1">
    <location>
        <position position="193"/>
    </location>
    <ligand>
        <name>substrate</name>
    </ligand>
</feature>
<feature type="binding site" evidence="1">
    <location>
        <position position="245"/>
    </location>
    <ligand>
        <name>substrate</name>
    </ligand>
</feature>
<feature type="binding site" evidence="1">
    <location>
        <position position="263"/>
    </location>
    <ligand>
        <name>substrate</name>
    </ligand>
</feature>
<organism>
    <name type="scientific">Brucella suis biovar 1 (strain 1330)</name>
    <dbReference type="NCBI Taxonomy" id="204722"/>
    <lineage>
        <taxon>Bacteria</taxon>
        <taxon>Pseudomonadati</taxon>
        <taxon>Pseudomonadota</taxon>
        <taxon>Alphaproteobacteria</taxon>
        <taxon>Hyphomicrobiales</taxon>
        <taxon>Brucellaceae</taxon>
        <taxon>Brucella/Ochrobactrum group</taxon>
        <taxon>Brucella</taxon>
    </lineage>
</organism>
<reference key="1">
    <citation type="journal article" date="2002" name="Proc. Natl. Acad. Sci. U.S.A.">
        <title>The Brucella suis genome reveals fundamental similarities between animal and plant pathogens and symbionts.</title>
        <authorList>
            <person name="Paulsen I.T."/>
            <person name="Seshadri R."/>
            <person name="Nelson K.E."/>
            <person name="Eisen J.A."/>
            <person name="Heidelberg J.F."/>
            <person name="Read T.D."/>
            <person name="Dodson R.J."/>
            <person name="Umayam L.A."/>
            <person name="Brinkac L.M."/>
            <person name="Beanan M.J."/>
            <person name="Daugherty S.C."/>
            <person name="DeBoy R.T."/>
            <person name="Durkin A.S."/>
            <person name="Kolonay J.F."/>
            <person name="Madupu R."/>
            <person name="Nelson W.C."/>
            <person name="Ayodeji B."/>
            <person name="Kraul M."/>
            <person name="Shetty J."/>
            <person name="Malek J.A."/>
            <person name="Van Aken S.E."/>
            <person name="Riedmuller S."/>
            <person name="Tettelin H."/>
            <person name="Gill S.R."/>
            <person name="White O."/>
            <person name="Salzberg S.L."/>
            <person name="Hoover D.L."/>
            <person name="Lindler L.E."/>
            <person name="Halling S.M."/>
            <person name="Boyle S.M."/>
            <person name="Fraser C.M."/>
        </authorList>
    </citation>
    <scope>NUCLEOTIDE SEQUENCE [LARGE SCALE GENOMIC DNA]</scope>
    <source>
        <strain>1330</strain>
    </source>
</reference>
<reference key="2">
    <citation type="journal article" date="2011" name="J. Bacteriol.">
        <title>Revised genome sequence of Brucella suis 1330.</title>
        <authorList>
            <person name="Tae H."/>
            <person name="Shallom S."/>
            <person name="Settlage R."/>
            <person name="Preston D."/>
            <person name="Adams L.G."/>
            <person name="Garner H.R."/>
        </authorList>
    </citation>
    <scope>NUCLEOTIDE SEQUENCE [LARGE SCALE GENOMIC DNA]</scope>
    <source>
        <strain>1330</strain>
    </source>
</reference>
<gene>
    <name evidence="1" type="primary">glsA</name>
    <name type="ordered locus">BRA0340</name>
    <name type="ordered locus">BS1330_II0337</name>
</gene>
<protein>
    <recommendedName>
        <fullName evidence="1">Glutaminase</fullName>
        <ecNumber evidence="1">3.5.1.2</ecNumber>
    </recommendedName>
</protein>
<accession>Q8FWV5</accession>
<accession>G0KC79</accession>
<comment type="catalytic activity">
    <reaction evidence="1">
        <text>L-glutamine + H2O = L-glutamate + NH4(+)</text>
        <dbReference type="Rhea" id="RHEA:15889"/>
        <dbReference type="ChEBI" id="CHEBI:15377"/>
        <dbReference type="ChEBI" id="CHEBI:28938"/>
        <dbReference type="ChEBI" id="CHEBI:29985"/>
        <dbReference type="ChEBI" id="CHEBI:58359"/>
        <dbReference type="EC" id="3.5.1.2"/>
    </reaction>
</comment>
<comment type="subunit">
    <text evidence="1">Homotetramer.</text>
</comment>
<comment type="similarity">
    <text evidence="1">Belongs to the glutaminase family.</text>
</comment>
<proteinExistence type="inferred from homology"/>
<keyword id="KW-0378">Hydrolase</keyword>